<protein>
    <recommendedName>
        <fullName evidence="1">Large ribosomal subunit protein bL9</fullName>
    </recommendedName>
    <alternativeName>
        <fullName evidence="2">50S ribosomal protein L9</fullName>
    </alternativeName>
</protein>
<proteinExistence type="inferred from homology"/>
<gene>
    <name evidence="1" type="primary">rplI</name>
    <name type="ordered locus">Fnod_0894</name>
</gene>
<keyword id="KW-1185">Reference proteome</keyword>
<keyword id="KW-0687">Ribonucleoprotein</keyword>
<keyword id="KW-0689">Ribosomal protein</keyword>
<keyword id="KW-0694">RNA-binding</keyword>
<keyword id="KW-0699">rRNA-binding</keyword>
<accession>A7HLG3</accession>
<feature type="chain" id="PRO_1000072447" description="Large ribosomal subunit protein bL9">
    <location>
        <begin position="1"/>
        <end position="149"/>
    </location>
</feature>
<evidence type="ECO:0000255" key="1">
    <source>
        <dbReference type="HAMAP-Rule" id="MF_00503"/>
    </source>
</evidence>
<evidence type="ECO:0000305" key="2"/>
<comment type="function">
    <text evidence="1">Binds to the 23S rRNA.</text>
</comment>
<comment type="similarity">
    <text evidence="1">Belongs to the bacterial ribosomal protein bL9 family.</text>
</comment>
<organism>
    <name type="scientific">Fervidobacterium nodosum (strain ATCC 35602 / DSM 5306 / Rt17-B1)</name>
    <dbReference type="NCBI Taxonomy" id="381764"/>
    <lineage>
        <taxon>Bacteria</taxon>
        <taxon>Thermotogati</taxon>
        <taxon>Thermotogota</taxon>
        <taxon>Thermotogae</taxon>
        <taxon>Thermotogales</taxon>
        <taxon>Fervidobacteriaceae</taxon>
        <taxon>Fervidobacterium</taxon>
    </lineage>
</organism>
<name>RL9_FERNB</name>
<sequence>MKVVLIQDVPKLGKKGEVINASDGYARNFLIPRGLAREATPEVLKQLEKEKEEEKKRLEALKRESENLLSELHKHVFKIKAKAGDGGKLFGSLTSANISDVISKTLSKEFDKKWIVLDNPIKALGTYDVTVKLPGGVSGKIKVEVLREE</sequence>
<dbReference type="EMBL" id="CP000771">
    <property type="protein sequence ID" value="ABS60746.1"/>
    <property type="molecule type" value="Genomic_DNA"/>
</dbReference>
<dbReference type="RefSeq" id="WP_011994062.1">
    <property type="nucleotide sequence ID" value="NC_009718.1"/>
</dbReference>
<dbReference type="SMR" id="A7HLG3"/>
<dbReference type="STRING" id="381764.Fnod_0894"/>
<dbReference type="KEGG" id="fno:Fnod_0894"/>
<dbReference type="eggNOG" id="COG0359">
    <property type="taxonomic scope" value="Bacteria"/>
</dbReference>
<dbReference type="HOGENOM" id="CLU_078938_3_0_0"/>
<dbReference type="OrthoDB" id="9788336at2"/>
<dbReference type="Proteomes" id="UP000002415">
    <property type="component" value="Chromosome"/>
</dbReference>
<dbReference type="GO" id="GO:1990904">
    <property type="term" value="C:ribonucleoprotein complex"/>
    <property type="evidence" value="ECO:0007669"/>
    <property type="project" value="UniProtKB-KW"/>
</dbReference>
<dbReference type="GO" id="GO:0005840">
    <property type="term" value="C:ribosome"/>
    <property type="evidence" value="ECO:0007669"/>
    <property type="project" value="UniProtKB-KW"/>
</dbReference>
<dbReference type="GO" id="GO:0019843">
    <property type="term" value="F:rRNA binding"/>
    <property type="evidence" value="ECO:0007669"/>
    <property type="project" value="UniProtKB-UniRule"/>
</dbReference>
<dbReference type="GO" id="GO:0003735">
    <property type="term" value="F:structural constituent of ribosome"/>
    <property type="evidence" value="ECO:0007669"/>
    <property type="project" value="InterPro"/>
</dbReference>
<dbReference type="GO" id="GO:0006412">
    <property type="term" value="P:translation"/>
    <property type="evidence" value="ECO:0007669"/>
    <property type="project" value="UniProtKB-UniRule"/>
</dbReference>
<dbReference type="FunFam" id="3.40.5.10:FF:000002">
    <property type="entry name" value="50S ribosomal protein L9"/>
    <property type="match status" value="1"/>
</dbReference>
<dbReference type="Gene3D" id="3.10.430.100">
    <property type="entry name" value="Ribosomal protein L9, C-terminal domain"/>
    <property type="match status" value="1"/>
</dbReference>
<dbReference type="Gene3D" id="3.40.5.10">
    <property type="entry name" value="Ribosomal protein L9, N-terminal domain"/>
    <property type="match status" value="1"/>
</dbReference>
<dbReference type="HAMAP" id="MF_00503">
    <property type="entry name" value="Ribosomal_bL9"/>
    <property type="match status" value="1"/>
</dbReference>
<dbReference type="InterPro" id="IPR000244">
    <property type="entry name" value="Ribosomal_bL9"/>
</dbReference>
<dbReference type="InterPro" id="IPR009027">
    <property type="entry name" value="Ribosomal_bL9/RNase_H1_N"/>
</dbReference>
<dbReference type="InterPro" id="IPR020594">
    <property type="entry name" value="Ribosomal_bL9_bac/chp"/>
</dbReference>
<dbReference type="InterPro" id="IPR020069">
    <property type="entry name" value="Ribosomal_bL9_C"/>
</dbReference>
<dbReference type="InterPro" id="IPR036791">
    <property type="entry name" value="Ribosomal_bL9_C_sf"/>
</dbReference>
<dbReference type="InterPro" id="IPR020070">
    <property type="entry name" value="Ribosomal_bL9_N"/>
</dbReference>
<dbReference type="InterPro" id="IPR036935">
    <property type="entry name" value="Ribosomal_bL9_N_sf"/>
</dbReference>
<dbReference type="NCBIfam" id="TIGR00158">
    <property type="entry name" value="L9"/>
    <property type="match status" value="1"/>
</dbReference>
<dbReference type="PANTHER" id="PTHR21368">
    <property type="entry name" value="50S RIBOSOMAL PROTEIN L9"/>
    <property type="match status" value="1"/>
</dbReference>
<dbReference type="Pfam" id="PF03948">
    <property type="entry name" value="Ribosomal_L9_C"/>
    <property type="match status" value="1"/>
</dbReference>
<dbReference type="Pfam" id="PF01281">
    <property type="entry name" value="Ribosomal_L9_N"/>
    <property type="match status" value="1"/>
</dbReference>
<dbReference type="SUPFAM" id="SSF55658">
    <property type="entry name" value="L9 N-domain-like"/>
    <property type="match status" value="1"/>
</dbReference>
<dbReference type="SUPFAM" id="SSF55653">
    <property type="entry name" value="Ribosomal protein L9 C-domain"/>
    <property type="match status" value="1"/>
</dbReference>
<dbReference type="PROSITE" id="PS00651">
    <property type="entry name" value="RIBOSOMAL_L9"/>
    <property type="match status" value="1"/>
</dbReference>
<reference key="1">
    <citation type="submission" date="2007-07" db="EMBL/GenBank/DDBJ databases">
        <title>Complete sequence of Fervidobacterium nodosum Rt17-B1.</title>
        <authorList>
            <consortium name="US DOE Joint Genome Institute"/>
            <person name="Copeland A."/>
            <person name="Lucas S."/>
            <person name="Lapidus A."/>
            <person name="Barry K."/>
            <person name="Glavina del Rio T."/>
            <person name="Dalin E."/>
            <person name="Tice H."/>
            <person name="Pitluck S."/>
            <person name="Saunders E."/>
            <person name="Brettin T."/>
            <person name="Bruce D."/>
            <person name="Detter J.C."/>
            <person name="Han C."/>
            <person name="Schmutz J."/>
            <person name="Larimer F."/>
            <person name="Land M."/>
            <person name="Hauser L."/>
            <person name="Kyrpides N."/>
            <person name="Mikhailova N."/>
            <person name="Nelson K."/>
            <person name="Gogarten J.P."/>
            <person name="Noll K."/>
            <person name="Richardson P."/>
        </authorList>
    </citation>
    <scope>NUCLEOTIDE SEQUENCE [LARGE SCALE GENOMIC DNA]</scope>
    <source>
        <strain>ATCC 35602 / DSM 5306 / Rt17-B1</strain>
    </source>
</reference>